<comment type="function">
    <text evidence="1">Plays a role in the inhibition of host innate immune response. Within the host nucleus, inhibits activation of interferon-beta promoter by inhibiting IRF3 activation.</text>
</comment>
<comment type="subcellular location">
    <subcellularLocation>
        <location evidence="1">Host nucleus</location>
    </subcellularLocation>
</comment>
<comment type="induction">
    <text evidence="1">Expressed in the early phase of the viral replicative cycle.</text>
</comment>
<comment type="similarity">
    <text evidence="2">Belongs to the poxviridae OPG036 family.</text>
</comment>
<keyword id="KW-0244">Early protein</keyword>
<keyword id="KW-1048">Host nucleus</keyword>
<keyword id="KW-0945">Host-virus interaction</keyword>
<keyword id="KW-1090">Inhibition of host innate immune response by virus</keyword>
<keyword id="KW-1092">Inhibition of host IRF3 by virus</keyword>
<keyword id="KW-1113">Inhibition of host RLR pathway by virus</keyword>
<keyword id="KW-1185">Reference proteome</keyword>
<keyword id="KW-0899">Viral immunoevasion</keyword>
<evidence type="ECO:0000250" key="1">
    <source>
        <dbReference type="UniProtKB" id="P14357"/>
    </source>
</evidence>
<evidence type="ECO:0000305" key="2"/>
<sequence>MTSSAMDNNESKVLEMVYDATILPDCSGMDPSIIDCINRHINMRIQRSYSSNIIAILDRFLMMNKDELNNTQCHIIKEFMTYEQMAIDYYGGYVNAILYQIRKRPNQHHTIDLFKRIKRTRYDTFKVNPVEFVKKVIGFVSILNKYKPIYSYVLYENVLYDELKCFIDYVETKYFQN</sequence>
<gene>
    <name type="primary">OPG036</name>
    <name type="ORF">MPXVgp024</name>
</gene>
<organism>
    <name type="scientific">Monkeypox virus</name>
    <dbReference type="NCBI Taxonomy" id="10244"/>
    <lineage>
        <taxon>Viruses</taxon>
        <taxon>Varidnaviria</taxon>
        <taxon>Bamfordvirae</taxon>
        <taxon>Nucleocytoviricota</taxon>
        <taxon>Pokkesviricetes</taxon>
        <taxon>Chitovirales</taxon>
        <taxon>Poxviridae</taxon>
        <taxon>Chordopoxvirinae</taxon>
        <taxon>Orthopoxvirus</taxon>
    </lineage>
</organism>
<dbReference type="EMBL" id="MT903340">
    <property type="protein sequence ID" value="QNP12892.1"/>
    <property type="molecule type" value="Genomic_DNA"/>
</dbReference>
<dbReference type="RefSeq" id="YP_010377019.1">
    <property type="nucleotide sequence ID" value="NC_063383.1"/>
</dbReference>
<dbReference type="GeneID" id="72551433"/>
<dbReference type="Proteomes" id="UP000516359">
    <property type="component" value="Genome"/>
</dbReference>
<dbReference type="GO" id="GO:0042025">
    <property type="term" value="C:host cell nucleus"/>
    <property type="evidence" value="ECO:0007669"/>
    <property type="project" value="UniProtKB-SubCell"/>
</dbReference>
<dbReference type="GO" id="GO:0039548">
    <property type="term" value="P:symbiont-mediated suppression of host cytoplasmic pattern recognition receptor signaling pathway via inhibition of IRF3 activity"/>
    <property type="evidence" value="ECO:0007669"/>
    <property type="project" value="UniProtKB-KW"/>
</dbReference>
<dbReference type="InterPro" id="IPR022819">
    <property type="entry name" value="Poxvirus_Bcl-2-like"/>
</dbReference>
<dbReference type="Pfam" id="PF06227">
    <property type="entry name" value="Poxv_Bcl-2-like"/>
    <property type="match status" value="1"/>
</dbReference>
<reference key="1">
    <citation type="journal article" date="2022" name="J. Infect. Dis.">
        <title>Exportation of Monkeypox virus from the African continent.</title>
        <authorList>
            <person name="Mauldin M.R."/>
            <person name="McCollum A.M."/>
            <person name="Nakazawa Y.J."/>
            <person name="Mandra A."/>
            <person name="Whitehouse E.R."/>
            <person name="Davidson W."/>
            <person name="Zhao H."/>
            <person name="Gao J."/>
            <person name="Li Y."/>
            <person name="Doty J."/>
            <person name="Yinka-Ogunleye A."/>
            <person name="Akinpelu A."/>
            <person name="Aruna O."/>
            <person name="Naidoo D."/>
            <person name="Lewandowski K."/>
            <person name="Afrough B."/>
            <person name="Graham V."/>
            <person name="Aarons E."/>
            <person name="Hewson R."/>
            <person name="Vipond R."/>
            <person name="Dunning J."/>
            <person name="Chand M."/>
            <person name="Brown C."/>
            <person name="Cohen-Gihon I."/>
            <person name="Erez N."/>
            <person name="Shifman O."/>
            <person name="Israeli O."/>
            <person name="Sharon M."/>
            <person name="Schwartz E."/>
            <person name="Beth-Din A."/>
            <person name="Zvi A."/>
            <person name="Mak T.M."/>
            <person name="Ng Y.K."/>
            <person name="Cui L."/>
            <person name="Lin R.T.P."/>
            <person name="Olson V.A."/>
            <person name="Brooks T."/>
            <person name="Paran N."/>
            <person name="Ihekweazu C."/>
            <person name="Reynolds M.G."/>
        </authorList>
    </citation>
    <scope>NUCLEOTIDE SEQUENCE [LARGE SCALE GENOMIC DNA]</scope>
    <source>
        <strain>MPXV-M5312_HM12_Rivers</strain>
    </source>
</reference>
<organismHost>
    <name type="scientific">Cynomys gunnisoni</name>
    <name type="common">Gunnison's prairie dog</name>
    <name type="synonym">Spermophilus gunnisoni</name>
    <dbReference type="NCBI Taxonomy" id="45479"/>
</organismHost>
<organismHost>
    <name type="scientific">Cynomys leucurus</name>
    <name type="common">White-tailed prairie dog</name>
    <dbReference type="NCBI Taxonomy" id="99825"/>
</organismHost>
<organismHost>
    <name type="scientific">Cynomys ludovicianus</name>
    <name type="common">Black-tailed prairie dog</name>
    <dbReference type="NCBI Taxonomy" id="45480"/>
</organismHost>
<organismHost>
    <name type="scientific">Cynomys mexicanus</name>
    <name type="common">Mexican prairie dog</name>
    <dbReference type="NCBI Taxonomy" id="99826"/>
</organismHost>
<organismHost>
    <name type="scientific">Cynomys parvidens</name>
    <name type="common">Utah prairie dog</name>
    <dbReference type="NCBI Taxonomy" id="99827"/>
</organismHost>
<organismHost>
    <name type="scientific">Gliridae</name>
    <name type="common">dormice</name>
    <dbReference type="NCBI Taxonomy" id="30650"/>
</organismHost>
<organismHost>
    <name type="scientific">Heliosciurus ruwenzorii</name>
    <name type="common">Ruwenzori sun squirrel</name>
    <dbReference type="NCBI Taxonomy" id="226685"/>
</organismHost>
<organismHost>
    <name type="scientific">Homo sapiens</name>
    <name type="common">Human</name>
    <dbReference type="NCBI Taxonomy" id="9606"/>
</organismHost>
<organismHost>
    <name type="scientific">Mus musculus</name>
    <name type="common">Mouse</name>
    <dbReference type="NCBI Taxonomy" id="10090"/>
</organismHost>
<feature type="chain" id="PRO_0000457199" description="Protein OPG036">
    <location>
        <begin position="1"/>
        <end position="177"/>
    </location>
</feature>
<protein>
    <recommendedName>
        <fullName>Protein OPG036</fullName>
    </recommendedName>
</protein>
<name>PG036_MONPV</name>
<accession>A0A7H0DN09</accession>
<proteinExistence type="inferred from homology"/>